<organism>
    <name type="scientific">Rickettsia rickettsii (strain Sheila Smith)</name>
    <dbReference type="NCBI Taxonomy" id="392021"/>
    <lineage>
        <taxon>Bacteria</taxon>
        <taxon>Pseudomonadati</taxon>
        <taxon>Pseudomonadota</taxon>
        <taxon>Alphaproteobacteria</taxon>
        <taxon>Rickettsiales</taxon>
        <taxon>Rickettsiaceae</taxon>
        <taxon>Rickettsieae</taxon>
        <taxon>Rickettsia</taxon>
        <taxon>spotted fever group</taxon>
    </lineage>
</organism>
<keyword id="KW-0997">Cell inner membrane</keyword>
<keyword id="KW-1003">Cell membrane</keyword>
<keyword id="KW-0472">Membrane</keyword>
<keyword id="KW-0808">Transferase</keyword>
<keyword id="KW-0812">Transmembrane</keyword>
<keyword id="KW-1133">Transmembrane helix</keyword>
<sequence length="259" mass="29070">MTFPNINPVIFSIGPLAISWYSLSYVIGILLGWFYANKIIEKFKPQITKKNLEDFITYAVIGIIVGGRLGFVLLYNPSRYFSNPIDILKTYEGGMSFHGGALGGIIAAYLFCRKYKINFLSLTDIIAPVVPIGLFLGRIANFINGELYGRITNASFGMIFPNSDLMPRHPSQLYEAFFEGLVLFSILAYATFKHKTLKKCGLNSGIFFTFYGLFRITIEIFREPDIQIGFILDSLTMGQILSVPMLLLGSYLICQSNPK</sequence>
<name>LGT_RICRS</name>
<proteinExistence type="inferred from homology"/>
<comment type="function">
    <text evidence="1">Catalyzes the transfer of the diacylglyceryl group from phosphatidylglycerol to the sulfhydryl group of the N-terminal cysteine of a prolipoprotein, the first step in the formation of mature lipoproteins.</text>
</comment>
<comment type="catalytic activity">
    <reaction evidence="1">
        <text>L-cysteinyl-[prolipoprotein] + a 1,2-diacyl-sn-glycero-3-phospho-(1'-sn-glycerol) = an S-1,2-diacyl-sn-glyceryl-L-cysteinyl-[prolipoprotein] + sn-glycerol 1-phosphate + H(+)</text>
        <dbReference type="Rhea" id="RHEA:56712"/>
        <dbReference type="Rhea" id="RHEA-COMP:14679"/>
        <dbReference type="Rhea" id="RHEA-COMP:14680"/>
        <dbReference type="ChEBI" id="CHEBI:15378"/>
        <dbReference type="ChEBI" id="CHEBI:29950"/>
        <dbReference type="ChEBI" id="CHEBI:57685"/>
        <dbReference type="ChEBI" id="CHEBI:64716"/>
        <dbReference type="ChEBI" id="CHEBI:140658"/>
        <dbReference type="EC" id="2.5.1.145"/>
    </reaction>
</comment>
<comment type="pathway">
    <text evidence="1">Protein modification; lipoprotein biosynthesis (diacylglyceryl transfer).</text>
</comment>
<comment type="subcellular location">
    <subcellularLocation>
        <location evidence="1">Cell inner membrane</location>
        <topology evidence="1">Multi-pass membrane protein</topology>
    </subcellularLocation>
</comment>
<comment type="similarity">
    <text evidence="1">Belongs to the Lgt family.</text>
</comment>
<gene>
    <name evidence="1" type="primary">lgt</name>
    <name type="ordered locus">A1G_00460</name>
</gene>
<evidence type="ECO:0000255" key="1">
    <source>
        <dbReference type="HAMAP-Rule" id="MF_01147"/>
    </source>
</evidence>
<reference key="1">
    <citation type="submission" date="2007-09" db="EMBL/GenBank/DDBJ databases">
        <title>Complete genome sequence of Rickettsia rickettsii.</title>
        <authorList>
            <person name="Madan A."/>
            <person name="Fahey J."/>
            <person name="Helton E."/>
            <person name="Ketteman M."/>
            <person name="Madan A."/>
            <person name="Rodrigues S."/>
            <person name="Sanchez A."/>
            <person name="Dasch G."/>
            <person name="Eremeeva M."/>
        </authorList>
    </citation>
    <scope>NUCLEOTIDE SEQUENCE [LARGE SCALE GENOMIC DNA]</scope>
    <source>
        <strain>Sheila Smith</strain>
    </source>
</reference>
<dbReference type="EC" id="2.5.1.145" evidence="1"/>
<dbReference type="EMBL" id="CP000848">
    <property type="protein sequence ID" value="ABV75680.1"/>
    <property type="molecule type" value="Genomic_DNA"/>
</dbReference>
<dbReference type="RefSeq" id="WP_012150302.1">
    <property type="nucleotide sequence ID" value="NZ_CP121767.1"/>
</dbReference>
<dbReference type="SMR" id="A8GQK5"/>
<dbReference type="GeneID" id="79936873"/>
<dbReference type="KEGG" id="rri:A1G_00460"/>
<dbReference type="HOGENOM" id="CLU_013386_1_0_5"/>
<dbReference type="UniPathway" id="UPA00664"/>
<dbReference type="Proteomes" id="UP000006832">
    <property type="component" value="Chromosome"/>
</dbReference>
<dbReference type="GO" id="GO:0005886">
    <property type="term" value="C:plasma membrane"/>
    <property type="evidence" value="ECO:0007669"/>
    <property type="project" value="UniProtKB-SubCell"/>
</dbReference>
<dbReference type="GO" id="GO:0008961">
    <property type="term" value="F:phosphatidylglycerol-prolipoprotein diacylglyceryl transferase activity"/>
    <property type="evidence" value="ECO:0007669"/>
    <property type="project" value="UniProtKB-UniRule"/>
</dbReference>
<dbReference type="GO" id="GO:0042158">
    <property type="term" value="P:lipoprotein biosynthetic process"/>
    <property type="evidence" value="ECO:0007669"/>
    <property type="project" value="UniProtKB-UniRule"/>
</dbReference>
<dbReference type="HAMAP" id="MF_01147">
    <property type="entry name" value="Lgt"/>
    <property type="match status" value="1"/>
</dbReference>
<dbReference type="InterPro" id="IPR001640">
    <property type="entry name" value="Lgt"/>
</dbReference>
<dbReference type="NCBIfam" id="TIGR00544">
    <property type="entry name" value="lgt"/>
    <property type="match status" value="1"/>
</dbReference>
<dbReference type="PANTHER" id="PTHR30589:SF0">
    <property type="entry name" value="PHOSPHATIDYLGLYCEROL--PROLIPOPROTEIN DIACYLGLYCERYL TRANSFERASE"/>
    <property type="match status" value="1"/>
</dbReference>
<dbReference type="PANTHER" id="PTHR30589">
    <property type="entry name" value="PROLIPOPROTEIN DIACYLGLYCERYL TRANSFERASE"/>
    <property type="match status" value="1"/>
</dbReference>
<dbReference type="Pfam" id="PF01790">
    <property type="entry name" value="LGT"/>
    <property type="match status" value="1"/>
</dbReference>
<dbReference type="PROSITE" id="PS01311">
    <property type="entry name" value="LGT"/>
    <property type="match status" value="1"/>
</dbReference>
<feature type="chain" id="PRO_1000053494" description="Phosphatidylglycerol--prolipoprotein diacylglyceryl transferase">
    <location>
        <begin position="1"/>
        <end position="259"/>
    </location>
</feature>
<feature type="transmembrane region" description="Helical" evidence="1">
    <location>
        <begin position="16"/>
        <end position="36"/>
    </location>
</feature>
<feature type="transmembrane region" description="Helical" evidence="1">
    <location>
        <begin position="55"/>
        <end position="75"/>
    </location>
</feature>
<feature type="transmembrane region" description="Helical" evidence="1">
    <location>
        <begin position="92"/>
        <end position="112"/>
    </location>
</feature>
<feature type="transmembrane region" description="Helical" evidence="1">
    <location>
        <begin position="117"/>
        <end position="137"/>
    </location>
</feature>
<feature type="transmembrane region" description="Helical" evidence="1">
    <location>
        <begin position="172"/>
        <end position="192"/>
    </location>
</feature>
<feature type="transmembrane region" description="Helical" evidence="1">
    <location>
        <begin position="201"/>
        <end position="221"/>
    </location>
</feature>
<feature type="transmembrane region" description="Helical" evidence="1">
    <location>
        <begin position="228"/>
        <end position="248"/>
    </location>
</feature>
<feature type="binding site" evidence="1">
    <location>
        <position position="138"/>
    </location>
    <ligand>
        <name>a 1,2-diacyl-sn-glycero-3-phospho-(1'-sn-glycerol)</name>
        <dbReference type="ChEBI" id="CHEBI:64716"/>
    </ligand>
</feature>
<accession>A8GQK5</accession>
<protein>
    <recommendedName>
        <fullName evidence="1">Phosphatidylglycerol--prolipoprotein diacylglyceryl transferase</fullName>
        <ecNumber evidence="1">2.5.1.145</ecNumber>
    </recommendedName>
</protein>